<feature type="initiator methionine" description="Removed" evidence="5">
    <location>
        <position position="1"/>
    </location>
</feature>
<feature type="chain" id="PRO_0000076932" description="Galectin-3">
    <location>
        <begin position="2"/>
        <end position="242"/>
    </location>
</feature>
<feature type="repeat" description="1">
    <location>
        <begin position="35"/>
        <end position="43"/>
    </location>
</feature>
<feature type="repeat" description="2">
    <location>
        <begin position="44"/>
        <end position="52"/>
    </location>
</feature>
<feature type="repeat" description="3">
    <location>
        <begin position="53"/>
        <end position="61"/>
    </location>
</feature>
<feature type="repeat" description="4">
    <location>
        <begin position="62"/>
        <end position="70"/>
    </location>
</feature>
<feature type="repeat" description="5; approximate">
    <location>
        <begin position="71"/>
        <end position="80"/>
    </location>
</feature>
<feature type="repeat" description="6; approximate">
    <location>
        <begin position="81"/>
        <end position="92"/>
    </location>
</feature>
<feature type="repeat" description="7; truncated">
    <location>
        <begin position="93"/>
        <end position="98"/>
    </location>
</feature>
<feature type="domain" description="Galectin" evidence="6">
    <location>
        <begin position="110"/>
        <end position="240"/>
    </location>
</feature>
<feature type="region of interest" description="Disordered" evidence="7">
    <location>
        <begin position="1"/>
        <end position="35"/>
    </location>
</feature>
<feature type="region of interest" description="7 X 9 AA tandem repeats of Y-P-G-X(3)-P-[GS]-A">
    <location>
        <begin position="35"/>
        <end position="98"/>
    </location>
</feature>
<feature type="region of interest" description="Disordered" evidence="7">
    <location>
        <begin position="55"/>
        <end position="93"/>
    </location>
</feature>
<feature type="short sequence motif" description="Nuclear export signal" evidence="1">
    <location>
        <begin position="218"/>
        <end position="233"/>
    </location>
</feature>
<feature type="compositionally biased region" description="Low complexity" evidence="7">
    <location>
        <begin position="17"/>
        <end position="31"/>
    </location>
</feature>
<feature type="compositionally biased region" description="Low complexity" evidence="7">
    <location>
        <begin position="80"/>
        <end position="93"/>
    </location>
</feature>
<feature type="binding site" evidence="1">
    <location>
        <begin position="173"/>
        <end position="181"/>
    </location>
    <ligand>
        <name>a beta-D-galactoside</name>
        <dbReference type="ChEBI" id="CHEBI:28034"/>
    </ligand>
</feature>
<feature type="modified residue" description="N-acetylalanine" evidence="5">
    <location>
        <position position="2"/>
    </location>
</feature>
<feature type="modified residue" description="Phosphoserine; by CK1" evidence="5">
    <location>
        <position position="6"/>
    </location>
</feature>
<feature type="modified residue" description="Phosphoserine" evidence="5">
    <location>
        <position position="12"/>
    </location>
</feature>
<feature type="disulfide bond" description="Interchain" evidence="1">
    <location>
        <position position="165"/>
    </location>
</feature>
<reference key="1">
    <citation type="journal article" date="1995" name="Gene">
        <title>Cloning of the cDNA encoding rabbit galectin-3.</title>
        <authorList>
            <person name="Gaudin J.-C."/>
            <person name="Monsigny M."/>
            <person name="Legrand A."/>
        </authorList>
    </citation>
    <scope>NUCLEOTIDE SEQUENCE [MRNA]</scope>
    <source>
        <strain>New Zealand white</strain>
        <tissue>Aorta</tissue>
    </source>
</reference>
<dbReference type="EMBL" id="U06470">
    <property type="protein sequence ID" value="AAC48491.1"/>
    <property type="molecule type" value="mRNA"/>
</dbReference>
<dbReference type="PIR" id="JC4300">
    <property type="entry name" value="JC4300"/>
</dbReference>
<dbReference type="RefSeq" id="NP_001075807.1">
    <property type="nucleotide sequence ID" value="NM_001082338.1"/>
</dbReference>
<dbReference type="SMR" id="P47845"/>
<dbReference type="FunCoup" id="P47845">
    <property type="interactions" value="18"/>
</dbReference>
<dbReference type="STRING" id="9986.ENSOCUP00000044843"/>
<dbReference type="PaxDb" id="9986-ENSOCUP00000002537"/>
<dbReference type="ABCD" id="P47845">
    <property type="antibodies" value="1 sequenced antibody"/>
</dbReference>
<dbReference type="GeneID" id="100009187"/>
<dbReference type="KEGG" id="ocu:100009187"/>
<dbReference type="CTD" id="3958"/>
<dbReference type="eggNOG" id="KOG3587">
    <property type="taxonomic scope" value="Eukaryota"/>
</dbReference>
<dbReference type="HOGENOM" id="CLU_072823_0_0_1"/>
<dbReference type="InParanoid" id="P47845"/>
<dbReference type="OMA" id="WPANPTW"/>
<dbReference type="OrthoDB" id="8942303at2759"/>
<dbReference type="TreeFam" id="TF315551"/>
<dbReference type="Proteomes" id="UP000001811">
    <property type="component" value="Unplaced"/>
</dbReference>
<dbReference type="GO" id="GO:0005737">
    <property type="term" value="C:cytoplasm"/>
    <property type="evidence" value="ECO:0007669"/>
    <property type="project" value="UniProtKB-SubCell"/>
</dbReference>
<dbReference type="GO" id="GO:0005615">
    <property type="term" value="C:extracellular space"/>
    <property type="evidence" value="ECO:0007669"/>
    <property type="project" value="TreeGrafter"/>
</dbReference>
<dbReference type="GO" id="GO:0001772">
    <property type="term" value="C:immunological synapse"/>
    <property type="evidence" value="ECO:0007669"/>
    <property type="project" value="TreeGrafter"/>
</dbReference>
<dbReference type="GO" id="GO:0005681">
    <property type="term" value="C:spliceosomal complex"/>
    <property type="evidence" value="ECO:0007669"/>
    <property type="project" value="UniProtKB-KW"/>
</dbReference>
<dbReference type="GO" id="GO:0048030">
    <property type="term" value="F:disaccharide binding"/>
    <property type="evidence" value="ECO:0007669"/>
    <property type="project" value="TreeGrafter"/>
</dbReference>
<dbReference type="GO" id="GO:0019863">
    <property type="term" value="F:IgE binding"/>
    <property type="evidence" value="ECO:0007669"/>
    <property type="project" value="UniProtKB-KW"/>
</dbReference>
<dbReference type="GO" id="GO:0043236">
    <property type="term" value="F:laminin binding"/>
    <property type="evidence" value="ECO:0007669"/>
    <property type="project" value="TreeGrafter"/>
</dbReference>
<dbReference type="GO" id="GO:0030154">
    <property type="term" value="P:cell differentiation"/>
    <property type="evidence" value="ECO:0007669"/>
    <property type="project" value="UniProtKB-KW"/>
</dbReference>
<dbReference type="GO" id="GO:0048245">
    <property type="term" value="P:eosinophil chemotaxis"/>
    <property type="evidence" value="ECO:0007669"/>
    <property type="project" value="TreeGrafter"/>
</dbReference>
<dbReference type="GO" id="GO:0045087">
    <property type="term" value="P:innate immune response"/>
    <property type="evidence" value="ECO:0007669"/>
    <property type="project" value="UniProtKB-KW"/>
</dbReference>
<dbReference type="GO" id="GO:0048246">
    <property type="term" value="P:macrophage chemotaxis"/>
    <property type="evidence" value="ECO:0007669"/>
    <property type="project" value="TreeGrafter"/>
</dbReference>
<dbReference type="GO" id="GO:0002548">
    <property type="term" value="P:monocyte chemotaxis"/>
    <property type="evidence" value="ECO:0007669"/>
    <property type="project" value="TreeGrafter"/>
</dbReference>
<dbReference type="GO" id="GO:0006397">
    <property type="term" value="P:mRNA processing"/>
    <property type="evidence" value="ECO:0007669"/>
    <property type="project" value="UniProtKB-KW"/>
</dbReference>
<dbReference type="GO" id="GO:0045806">
    <property type="term" value="P:negative regulation of endocytosis"/>
    <property type="evidence" value="ECO:0007669"/>
    <property type="project" value="TreeGrafter"/>
</dbReference>
<dbReference type="GO" id="GO:2001237">
    <property type="term" value="P:negative regulation of extrinsic apoptotic signaling pathway"/>
    <property type="evidence" value="ECO:0007669"/>
    <property type="project" value="TreeGrafter"/>
</dbReference>
<dbReference type="GO" id="GO:0030593">
    <property type="term" value="P:neutrophil chemotaxis"/>
    <property type="evidence" value="ECO:0007669"/>
    <property type="project" value="TreeGrafter"/>
</dbReference>
<dbReference type="GO" id="GO:0050918">
    <property type="term" value="P:positive chemotaxis"/>
    <property type="evidence" value="ECO:0007669"/>
    <property type="project" value="TreeGrafter"/>
</dbReference>
<dbReference type="GO" id="GO:0090280">
    <property type="term" value="P:positive regulation of calcium ion import"/>
    <property type="evidence" value="ECO:0007669"/>
    <property type="project" value="TreeGrafter"/>
</dbReference>
<dbReference type="GO" id="GO:0008380">
    <property type="term" value="P:RNA splicing"/>
    <property type="evidence" value="ECO:0007669"/>
    <property type="project" value="UniProtKB-KW"/>
</dbReference>
<dbReference type="CDD" id="cd00070">
    <property type="entry name" value="GLECT"/>
    <property type="match status" value="1"/>
</dbReference>
<dbReference type="FunFam" id="2.60.120.200:FF:000023">
    <property type="entry name" value="Galectin"/>
    <property type="match status" value="1"/>
</dbReference>
<dbReference type="Gene3D" id="2.60.120.200">
    <property type="match status" value="1"/>
</dbReference>
<dbReference type="InterPro" id="IPR013320">
    <property type="entry name" value="ConA-like_dom_sf"/>
</dbReference>
<dbReference type="InterPro" id="IPR044156">
    <property type="entry name" value="Galectin-like"/>
</dbReference>
<dbReference type="InterPro" id="IPR001079">
    <property type="entry name" value="Galectin_CRD"/>
</dbReference>
<dbReference type="PANTHER" id="PTHR11346">
    <property type="entry name" value="GALECTIN"/>
    <property type="match status" value="1"/>
</dbReference>
<dbReference type="PANTHER" id="PTHR11346:SF26">
    <property type="entry name" value="GALECTIN-3"/>
    <property type="match status" value="1"/>
</dbReference>
<dbReference type="Pfam" id="PF00337">
    <property type="entry name" value="Gal-bind_lectin"/>
    <property type="match status" value="1"/>
</dbReference>
<dbReference type="SMART" id="SM00908">
    <property type="entry name" value="Gal-bind_lectin"/>
    <property type="match status" value="1"/>
</dbReference>
<dbReference type="SMART" id="SM00276">
    <property type="entry name" value="GLECT"/>
    <property type="match status" value="1"/>
</dbReference>
<dbReference type="SUPFAM" id="SSF49899">
    <property type="entry name" value="Concanavalin A-like lectins/glucanases"/>
    <property type="match status" value="1"/>
</dbReference>
<dbReference type="PROSITE" id="PS51304">
    <property type="entry name" value="GALECTIN"/>
    <property type="match status" value="1"/>
</dbReference>
<protein>
    <recommendedName>
        <fullName>Galectin-3</fullName>
        <shortName>Gal-3</shortName>
    </recommendedName>
    <alternativeName>
        <fullName>35 kDa lectin</fullName>
    </alternativeName>
    <alternativeName>
        <fullName>Carbohydrate-binding protein 35</fullName>
        <shortName>CBP 35</shortName>
    </alternativeName>
    <alternativeName>
        <fullName>Galactose-specific lectin 3</fullName>
    </alternativeName>
    <alternativeName>
        <fullName>IgE-binding protein</fullName>
    </alternativeName>
    <alternativeName>
        <fullName>Laminin-binding protein</fullName>
    </alternativeName>
    <alternativeName>
        <fullName>Lectin L-29</fullName>
    </alternativeName>
    <alternativeName>
        <fullName>Mac-2 antigen</fullName>
    </alternativeName>
</protein>
<proteinExistence type="evidence at transcript level"/>
<gene>
    <name type="primary">LGALS3</name>
</gene>
<keyword id="KW-0007">Acetylation</keyword>
<keyword id="KW-0963">Cytoplasm</keyword>
<keyword id="KW-0221">Differentiation</keyword>
<keyword id="KW-1015">Disulfide bond</keyword>
<keyword id="KW-0389">IgE-binding protein</keyword>
<keyword id="KW-0391">Immunity</keyword>
<keyword id="KW-0399">Innate immunity</keyword>
<keyword id="KW-0430">Lectin</keyword>
<keyword id="KW-0507">mRNA processing</keyword>
<keyword id="KW-0508">mRNA splicing</keyword>
<keyword id="KW-0539">Nucleus</keyword>
<keyword id="KW-0597">Phosphoprotein</keyword>
<keyword id="KW-1185">Reference proteome</keyword>
<keyword id="KW-0677">Repeat</keyword>
<keyword id="KW-0964">Secreted</keyword>
<keyword id="KW-0747">Spliceosome</keyword>
<comment type="function">
    <text evidence="1 4">Galactose-specific lectin which binds IgE. May mediate with the alpha-3, beta-1 integrin the stimulation by CSPG4 of endothelial cells migration. Together with DMBT1, required for terminal differentiation of columnar epithelial cells during early embryogenesis (By similarity). In the nucleus: acts as a pre-mRNA splicing factor. Involved in acute inflammatory responses including neutrophil activation and adhesion, chemoattraction of monocytes macrophages, opsonization of apoptotic neutrophils, and activation of mast cells. Together with TRIM16, coordinates the recognition of membrane damage with mobilization of the core autophagy regulators ATG16L1 and BECN1 in response to damaged endomembranes (By similarity). When secreted, interacts with NK cell-activating receptor NCR3/NKp30 acting as an inhibitory ligand which antagonizes NK cell attack (By similarity).</text>
</comment>
<comment type="subunit">
    <text evidence="2 3 4">Probably forms homo- or heterodimers. Interacts with DMBT1 (By similarity). Interacts with CD6 and ALCAM. Forms a complex with the ITGA3, ITGB1 and CSPG4. Interacts with LGALS3BP, LYPD3, ZFTRAF1 and UACA. Interacts with TRIM16; this interaction mediates autophagy of damage endomembranes. Interacts with cargo receptor TMED10; the interaction mediates the translocation from the cytoplasm into the ERGIC (endoplasmic reticulum-Golgi intermediate compartment) and thereby secretion (By similarity). Interacts with and inhibits by binding NCR3/NKp30 (By similarity).</text>
</comment>
<comment type="subcellular location">
    <subcellularLocation>
        <location evidence="4">Cytoplasm</location>
    </subcellularLocation>
    <subcellularLocation>
        <location evidence="4">Nucleus</location>
    </subcellularLocation>
    <subcellularLocation>
        <location evidence="4">Secreted</location>
    </subcellularLocation>
    <text evidence="4">Secreted by a non-classical secretory pathway and associates with the cell surface. Can be secreted; the secretion is dependent on protein unfolding and facilitated by the cargo receptor TMED10; it results in protein translocation from the cytoplasm into the ERGIC (endoplasmic reticulum-Golgi intermediate compartment) followed by vesicle entry and secretion.</text>
</comment>
<name>LEG3_RABIT</name>
<accession>P47845</accession>
<organism>
    <name type="scientific">Oryctolagus cuniculus</name>
    <name type="common">Rabbit</name>
    <dbReference type="NCBI Taxonomy" id="9986"/>
    <lineage>
        <taxon>Eukaryota</taxon>
        <taxon>Metazoa</taxon>
        <taxon>Chordata</taxon>
        <taxon>Craniata</taxon>
        <taxon>Vertebrata</taxon>
        <taxon>Euteleostomi</taxon>
        <taxon>Mammalia</taxon>
        <taxon>Eutheria</taxon>
        <taxon>Euarchontoglires</taxon>
        <taxon>Glires</taxon>
        <taxon>Lagomorpha</taxon>
        <taxon>Leporidae</taxon>
        <taxon>Oryctolagus</taxon>
    </lineage>
</organism>
<evidence type="ECO:0000250" key="1"/>
<evidence type="ECO:0000250" key="2">
    <source>
        <dbReference type="UniProtKB" id="P08699"/>
    </source>
</evidence>
<evidence type="ECO:0000250" key="3">
    <source>
        <dbReference type="UniProtKB" id="P16110"/>
    </source>
</evidence>
<evidence type="ECO:0000250" key="4">
    <source>
        <dbReference type="UniProtKB" id="P17931"/>
    </source>
</evidence>
<evidence type="ECO:0000250" key="5">
    <source>
        <dbReference type="UniProtKB" id="P38486"/>
    </source>
</evidence>
<evidence type="ECO:0000255" key="6">
    <source>
        <dbReference type="PROSITE-ProRule" id="PRU00639"/>
    </source>
</evidence>
<evidence type="ECO:0000256" key="7">
    <source>
        <dbReference type="SAM" id="MobiDB-lite"/>
    </source>
</evidence>
<sequence>MADGFSLNDALSGSGHPPNQGWPGPWGNQPAGPGGYPGAAYPGAYPGHAPGAYPGQAPPGPYPGPGAHGAYPGQPGGPGAYPSPGQPSGAGAYPGASPYSASAGPLPVPYDLPLPGGVMPRMLITIVGTVKPNANRLALDFKRGNDVAFHFNPRFNENNRRVIVCNTKVDNNWGREERQTTFPFEIGKPFKIQVLVEPDHFKVAVNDAHLLQYNHRMRNLKEINKLGISGDIQLTSASHAMI</sequence>